<feature type="chain" id="PRO_0000259268" description="D-aminoacyl-tRNA deacylase">
    <location>
        <begin position="1"/>
        <end position="152"/>
    </location>
</feature>
<feature type="short sequence motif" description="Gly-cisPro motif, important for rejection of L-amino acids" evidence="1">
    <location>
        <begin position="142"/>
        <end position="143"/>
    </location>
</feature>
<organism>
    <name type="scientific">Paraburkholderia xenovorans (strain LB400)</name>
    <dbReference type="NCBI Taxonomy" id="266265"/>
    <lineage>
        <taxon>Bacteria</taxon>
        <taxon>Pseudomonadati</taxon>
        <taxon>Pseudomonadota</taxon>
        <taxon>Betaproteobacteria</taxon>
        <taxon>Burkholderiales</taxon>
        <taxon>Burkholderiaceae</taxon>
        <taxon>Paraburkholderia</taxon>
    </lineage>
</organism>
<comment type="function">
    <text evidence="1">An aminoacyl-tRNA editing enzyme that deacylates mischarged D-aminoacyl-tRNAs. Also deacylates mischarged glycyl-tRNA(Ala), protecting cells against glycine mischarging by AlaRS. Acts via tRNA-based rather than protein-based catalysis; rejects L-amino acids rather than detecting D-amino acids in the active site. By recycling D-aminoacyl-tRNA to D-amino acids and free tRNA molecules, this enzyme counteracts the toxicity associated with the formation of D-aminoacyl-tRNA entities in vivo and helps enforce protein L-homochirality.</text>
</comment>
<comment type="catalytic activity">
    <reaction evidence="1">
        <text>glycyl-tRNA(Ala) + H2O = tRNA(Ala) + glycine + H(+)</text>
        <dbReference type="Rhea" id="RHEA:53744"/>
        <dbReference type="Rhea" id="RHEA-COMP:9657"/>
        <dbReference type="Rhea" id="RHEA-COMP:13640"/>
        <dbReference type="ChEBI" id="CHEBI:15377"/>
        <dbReference type="ChEBI" id="CHEBI:15378"/>
        <dbReference type="ChEBI" id="CHEBI:57305"/>
        <dbReference type="ChEBI" id="CHEBI:78442"/>
        <dbReference type="ChEBI" id="CHEBI:78522"/>
        <dbReference type="EC" id="3.1.1.96"/>
    </reaction>
</comment>
<comment type="catalytic activity">
    <reaction evidence="1">
        <text>a D-aminoacyl-tRNA + H2O = a tRNA + a D-alpha-amino acid + H(+)</text>
        <dbReference type="Rhea" id="RHEA:13953"/>
        <dbReference type="Rhea" id="RHEA-COMP:10123"/>
        <dbReference type="Rhea" id="RHEA-COMP:10124"/>
        <dbReference type="ChEBI" id="CHEBI:15377"/>
        <dbReference type="ChEBI" id="CHEBI:15378"/>
        <dbReference type="ChEBI" id="CHEBI:59871"/>
        <dbReference type="ChEBI" id="CHEBI:78442"/>
        <dbReference type="ChEBI" id="CHEBI:79333"/>
        <dbReference type="EC" id="3.1.1.96"/>
    </reaction>
</comment>
<comment type="subunit">
    <text evidence="1">Homodimer.</text>
</comment>
<comment type="subcellular location">
    <subcellularLocation>
        <location evidence="1">Cytoplasm</location>
    </subcellularLocation>
</comment>
<comment type="domain">
    <text evidence="1">A Gly-cisPro motif from one monomer fits into the active site of the other monomer to allow specific chiral rejection of L-amino acids.</text>
</comment>
<comment type="similarity">
    <text evidence="1">Belongs to the DTD family.</text>
</comment>
<reference key="1">
    <citation type="journal article" date="2006" name="Proc. Natl. Acad. Sci. U.S.A.">
        <title>Burkholderia xenovorans LB400 harbors a multi-replicon, 9.73-Mbp genome shaped for versatility.</title>
        <authorList>
            <person name="Chain P.S.G."/>
            <person name="Denef V.J."/>
            <person name="Konstantinidis K.T."/>
            <person name="Vergez L.M."/>
            <person name="Agullo L."/>
            <person name="Reyes V.L."/>
            <person name="Hauser L."/>
            <person name="Cordova M."/>
            <person name="Gomez L."/>
            <person name="Gonzalez M."/>
            <person name="Land M."/>
            <person name="Lao V."/>
            <person name="Larimer F."/>
            <person name="LiPuma J.J."/>
            <person name="Mahenthiralingam E."/>
            <person name="Malfatti S.A."/>
            <person name="Marx C.J."/>
            <person name="Parnell J.J."/>
            <person name="Ramette A."/>
            <person name="Richardson P."/>
            <person name="Seeger M."/>
            <person name="Smith D."/>
            <person name="Spilker T."/>
            <person name="Sul W.J."/>
            <person name="Tsoi T.V."/>
            <person name="Ulrich L.E."/>
            <person name="Zhulin I.B."/>
            <person name="Tiedje J.M."/>
        </authorList>
    </citation>
    <scope>NUCLEOTIDE SEQUENCE [LARGE SCALE GENOMIC DNA]</scope>
    <source>
        <strain>LB400</strain>
    </source>
</reference>
<protein>
    <recommendedName>
        <fullName evidence="1">D-aminoacyl-tRNA deacylase</fullName>
        <shortName evidence="1">DTD</shortName>
        <ecNumber evidence="1">3.1.1.96</ecNumber>
    </recommendedName>
    <alternativeName>
        <fullName evidence="1">Gly-tRNA(Ala) deacylase</fullName>
    </alternativeName>
</protein>
<accession>Q13UB7</accession>
<sequence length="152" mass="16110">MIALIQRVRRAEVRVADRVTGAIEAGLLALVCAERGDTEAAADRLLAKVLGYRVFSDAAGKMNLSVQNLDGAGRAGGLLLVSQFTLAADTNSGLRPSFTPAAPPDEGKRLFDYFVAAARAKHPVVETGEFGADMQVSLVNDGPVTFWLQTHA</sequence>
<proteinExistence type="inferred from homology"/>
<dbReference type="EC" id="3.1.1.96" evidence="1"/>
<dbReference type="EMBL" id="CP000270">
    <property type="protein sequence ID" value="ABE32322.1"/>
    <property type="molecule type" value="Genomic_DNA"/>
</dbReference>
<dbReference type="RefSeq" id="WP_011489807.1">
    <property type="nucleotide sequence ID" value="NC_007951.1"/>
</dbReference>
<dbReference type="SMR" id="Q13UB7"/>
<dbReference type="STRING" id="266265.Bxe_A0612"/>
<dbReference type="KEGG" id="bxb:DR64_2780"/>
<dbReference type="KEGG" id="bxe:Bxe_A0612"/>
<dbReference type="PATRIC" id="fig|266265.5.peg.4002"/>
<dbReference type="eggNOG" id="COG1490">
    <property type="taxonomic scope" value="Bacteria"/>
</dbReference>
<dbReference type="OrthoDB" id="9801395at2"/>
<dbReference type="Proteomes" id="UP000001817">
    <property type="component" value="Chromosome 1"/>
</dbReference>
<dbReference type="GO" id="GO:0005737">
    <property type="term" value="C:cytoplasm"/>
    <property type="evidence" value="ECO:0007669"/>
    <property type="project" value="UniProtKB-SubCell"/>
</dbReference>
<dbReference type="GO" id="GO:0051500">
    <property type="term" value="F:D-tyrosyl-tRNA(Tyr) deacylase activity"/>
    <property type="evidence" value="ECO:0007669"/>
    <property type="project" value="TreeGrafter"/>
</dbReference>
<dbReference type="GO" id="GO:0106026">
    <property type="term" value="F:Gly-tRNA(Ala) deacylase activity"/>
    <property type="evidence" value="ECO:0007669"/>
    <property type="project" value="UniProtKB-UniRule"/>
</dbReference>
<dbReference type="GO" id="GO:0043908">
    <property type="term" value="F:Ser(Gly)-tRNA(Ala) hydrolase activity"/>
    <property type="evidence" value="ECO:0007669"/>
    <property type="project" value="UniProtKB-UniRule"/>
</dbReference>
<dbReference type="GO" id="GO:0000049">
    <property type="term" value="F:tRNA binding"/>
    <property type="evidence" value="ECO:0007669"/>
    <property type="project" value="UniProtKB-UniRule"/>
</dbReference>
<dbReference type="GO" id="GO:0019478">
    <property type="term" value="P:D-amino acid catabolic process"/>
    <property type="evidence" value="ECO:0007669"/>
    <property type="project" value="UniProtKB-UniRule"/>
</dbReference>
<dbReference type="CDD" id="cd00563">
    <property type="entry name" value="Dtyr_deacylase"/>
    <property type="match status" value="1"/>
</dbReference>
<dbReference type="FunFam" id="3.50.80.10:FF:000001">
    <property type="entry name" value="D-aminoacyl-tRNA deacylase"/>
    <property type="match status" value="1"/>
</dbReference>
<dbReference type="Gene3D" id="3.50.80.10">
    <property type="entry name" value="D-tyrosyl-tRNA(Tyr) deacylase"/>
    <property type="match status" value="1"/>
</dbReference>
<dbReference type="HAMAP" id="MF_00518">
    <property type="entry name" value="Deacylase_Dtd"/>
    <property type="match status" value="1"/>
</dbReference>
<dbReference type="InterPro" id="IPR003732">
    <property type="entry name" value="Daa-tRNA_deacyls_DTD"/>
</dbReference>
<dbReference type="InterPro" id="IPR023509">
    <property type="entry name" value="DTD-like_sf"/>
</dbReference>
<dbReference type="NCBIfam" id="TIGR00256">
    <property type="entry name" value="D-aminoacyl-tRNA deacylase"/>
    <property type="match status" value="1"/>
</dbReference>
<dbReference type="PANTHER" id="PTHR10472:SF5">
    <property type="entry name" value="D-AMINOACYL-TRNA DEACYLASE 1"/>
    <property type="match status" value="1"/>
</dbReference>
<dbReference type="PANTHER" id="PTHR10472">
    <property type="entry name" value="D-TYROSYL-TRNA TYR DEACYLASE"/>
    <property type="match status" value="1"/>
</dbReference>
<dbReference type="Pfam" id="PF02580">
    <property type="entry name" value="Tyr_Deacylase"/>
    <property type="match status" value="1"/>
</dbReference>
<dbReference type="SUPFAM" id="SSF69500">
    <property type="entry name" value="DTD-like"/>
    <property type="match status" value="1"/>
</dbReference>
<evidence type="ECO:0000255" key="1">
    <source>
        <dbReference type="HAMAP-Rule" id="MF_00518"/>
    </source>
</evidence>
<keyword id="KW-0963">Cytoplasm</keyword>
<keyword id="KW-0378">Hydrolase</keyword>
<keyword id="KW-1185">Reference proteome</keyword>
<keyword id="KW-0694">RNA-binding</keyword>
<keyword id="KW-0820">tRNA-binding</keyword>
<name>DTD_PARXL</name>
<gene>
    <name evidence="1" type="primary">dtd</name>
    <name type="ordered locus">Bxeno_A3784</name>
    <name type="ORF">Bxe_A0612</name>
</gene>